<feature type="chain" id="PRO_0000117578" description="NADH-ubiquinone oxidoreductase chain 2">
    <location>
        <begin position="1"/>
        <end position="347"/>
    </location>
</feature>
<feature type="transmembrane region" description="Helical" evidence="2">
    <location>
        <begin position="2"/>
        <end position="22"/>
    </location>
</feature>
<feature type="transmembrane region" description="Helical" evidence="2">
    <location>
        <begin position="25"/>
        <end position="45"/>
    </location>
</feature>
<feature type="transmembrane region" description="Helical" evidence="2">
    <location>
        <begin position="56"/>
        <end position="76"/>
    </location>
</feature>
<feature type="transmembrane region" description="Helical" evidence="2">
    <location>
        <begin position="96"/>
        <end position="116"/>
    </location>
</feature>
<feature type="transmembrane region" description="Helical" evidence="2">
    <location>
        <begin position="122"/>
        <end position="142"/>
    </location>
</feature>
<feature type="transmembrane region" description="Helical" evidence="2">
    <location>
        <begin position="149"/>
        <end position="169"/>
    </location>
</feature>
<feature type="transmembrane region" description="Helical" evidence="2">
    <location>
        <begin position="178"/>
        <end position="197"/>
    </location>
</feature>
<feature type="transmembrane region" description="Helical" evidence="2">
    <location>
        <begin position="202"/>
        <end position="219"/>
    </location>
</feature>
<feature type="transmembrane region" description="Helical" evidence="2">
    <location>
        <begin position="241"/>
        <end position="261"/>
    </location>
</feature>
<feature type="transmembrane region" description="Helical" evidence="2">
    <location>
        <begin position="278"/>
        <end position="298"/>
    </location>
</feature>
<feature type="transmembrane region" description="Helical" evidence="2">
    <location>
        <begin position="326"/>
        <end position="346"/>
    </location>
</feature>
<proteinExistence type="inferred from homology"/>
<comment type="function">
    <text evidence="1">Core subunit of the mitochondrial membrane respiratory chain NADH dehydrogenase (Complex I) that is believed to belong to the minimal assembly required for catalysis. Complex I functions in the transfer of electrons from NADH to the respiratory chain. The immediate electron acceptor for the enzyme is believed to be ubiquinone (By similarity).</text>
</comment>
<comment type="catalytic activity">
    <reaction>
        <text>a ubiquinone + NADH + 5 H(+)(in) = a ubiquinol + NAD(+) + 4 H(+)(out)</text>
        <dbReference type="Rhea" id="RHEA:29091"/>
        <dbReference type="Rhea" id="RHEA-COMP:9565"/>
        <dbReference type="Rhea" id="RHEA-COMP:9566"/>
        <dbReference type="ChEBI" id="CHEBI:15378"/>
        <dbReference type="ChEBI" id="CHEBI:16389"/>
        <dbReference type="ChEBI" id="CHEBI:17976"/>
        <dbReference type="ChEBI" id="CHEBI:57540"/>
        <dbReference type="ChEBI" id="CHEBI:57945"/>
        <dbReference type="EC" id="7.1.1.2"/>
    </reaction>
</comment>
<comment type="subcellular location">
    <subcellularLocation>
        <location>Mitochondrion inner membrane</location>
        <topology>Multi-pass membrane protein</topology>
    </subcellularLocation>
</comment>
<comment type="similarity">
    <text evidence="3">Belongs to the complex I subunit 2 family.</text>
</comment>
<geneLocation type="mitochondrion"/>
<organism>
    <name type="scientific">Didelphis virginiana</name>
    <name type="common">North American opossum</name>
    <name type="synonym">Didelphis marsupialis virginiana</name>
    <dbReference type="NCBI Taxonomy" id="9267"/>
    <lineage>
        <taxon>Eukaryota</taxon>
        <taxon>Metazoa</taxon>
        <taxon>Chordata</taxon>
        <taxon>Craniata</taxon>
        <taxon>Vertebrata</taxon>
        <taxon>Euteleostomi</taxon>
        <taxon>Mammalia</taxon>
        <taxon>Metatheria</taxon>
        <taxon>Didelphimorphia</taxon>
        <taxon>Didelphidae</taxon>
        <taxon>Didelphis</taxon>
    </lineage>
</organism>
<protein>
    <recommendedName>
        <fullName>NADH-ubiquinone oxidoreductase chain 2</fullName>
        <ecNumber>7.1.1.2</ecNumber>
    </recommendedName>
    <alternativeName>
        <fullName>NADH dehydrogenase subunit 2</fullName>
    </alternativeName>
</protein>
<dbReference type="EC" id="7.1.1.2"/>
<dbReference type="EMBL" id="Z29573">
    <property type="protein sequence ID" value="CAA82678.1"/>
    <property type="molecule type" value="Genomic_DNA"/>
</dbReference>
<dbReference type="PIR" id="S47871">
    <property type="entry name" value="S47871"/>
</dbReference>
<dbReference type="RefSeq" id="NP_007096.1">
    <property type="nucleotide sequence ID" value="NC_001610.1"/>
</dbReference>
<dbReference type="SMR" id="P41305"/>
<dbReference type="GeneID" id="807781"/>
<dbReference type="CTD" id="4536"/>
<dbReference type="GO" id="GO:0005743">
    <property type="term" value="C:mitochondrial inner membrane"/>
    <property type="evidence" value="ECO:0007669"/>
    <property type="project" value="UniProtKB-SubCell"/>
</dbReference>
<dbReference type="GO" id="GO:0008137">
    <property type="term" value="F:NADH dehydrogenase (ubiquinone) activity"/>
    <property type="evidence" value="ECO:0007669"/>
    <property type="project" value="UniProtKB-EC"/>
</dbReference>
<dbReference type="GO" id="GO:0006120">
    <property type="term" value="P:mitochondrial electron transport, NADH to ubiquinone"/>
    <property type="evidence" value="ECO:0007669"/>
    <property type="project" value="InterPro"/>
</dbReference>
<dbReference type="InterPro" id="IPR050175">
    <property type="entry name" value="Complex_I_Subunit_2"/>
</dbReference>
<dbReference type="InterPro" id="IPR010933">
    <property type="entry name" value="NADH_DH_su2_C"/>
</dbReference>
<dbReference type="InterPro" id="IPR003917">
    <property type="entry name" value="NADH_UbQ_OxRdtase_chain2"/>
</dbReference>
<dbReference type="InterPro" id="IPR001750">
    <property type="entry name" value="ND/Mrp_TM"/>
</dbReference>
<dbReference type="PANTHER" id="PTHR46552">
    <property type="entry name" value="NADH-UBIQUINONE OXIDOREDUCTASE CHAIN 2"/>
    <property type="match status" value="1"/>
</dbReference>
<dbReference type="PANTHER" id="PTHR46552:SF1">
    <property type="entry name" value="NADH-UBIQUINONE OXIDOREDUCTASE CHAIN 2"/>
    <property type="match status" value="1"/>
</dbReference>
<dbReference type="Pfam" id="PF06444">
    <property type="entry name" value="NADH_dehy_S2_C"/>
    <property type="match status" value="1"/>
</dbReference>
<dbReference type="Pfam" id="PF00361">
    <property type="entry name" value="Proton_antipo_M"/>
    <property type="match status" value="1"/>
</dbReference>
<dbReference type="PRINTS" id="PR01436">
    <property type="entry name" value="NADHDHGNASE2"/>
</dbReference>
<evidence type="ECO:0000250" key="1"/>
<evidence type="ECO:0000255" key="2"/>
<evidence type="ECO:0000305" key="3"/>
<sequence length="347" mass="38734">MSPYVLTIMSFSLLLGTTMTLISNHWLTAWMGLEINTLAIIPLMTKPHHPRSMESAIKYFMIQATASMIILFSAIFNASTTNQWMTGQISNTSASFMMTIALAMKLGLAPFHFWVPEVTQGIPLLSGMLLLTWQKIAPISIFYQISPSLNMSLLMILSITSTLLGGWGGLNQTQLRKILAYSSIAHMGWMAIIIMIYPSLTILNLILYLASTITMFMVLNQSSSTKINSLSILWNKSAPNMIIITLTLLSLGGLPPLTGFMPKWLILQELINFNNIPLAMMLALSTLLNLFFYMRIIYSSTLTMFPSINNTKMQWTLYSHKTISPIPTLTIISSLLLPMTPVFITLS</sequence>
<name>NU2M_DIDVI</name>
<accession>P41305</accession>
<reference key="1">
    <citation type="journal article" date="1994" name="Genetics">
        <title>The marsupial mitochondrial genome and the evolution of placental mammals.</title>
        <authorList>
            <person name="Janke A."/>
            <person name="Feldmaier-Fuchs G."/>
            <person name="Thomas K."/>
            <person name="von Haeseler A."/>
            <person name="Paabo S."/>
        </authorList>
    </citation>
    <scope>NUCLEOTIDE SEQUENCE [GENOMIC DNA]</scope>
    <source>
        <tissue>Liver</tissue>
    </source>
</reference>
<keyword id="KW-0249">Electron transport</keyword>
<keyword id="KW-0472">Membrane</keyword>
<keyword id="KW-0496">Mitochondrion</keyword>
<keyword id="KW-0999">Mitochondrion inner membrane</keyword>
<keyword id="KW-0520">NAD</keyword>
<keyword id="KW-0679">Respiratory chain</keyword>
<keyword id="KW-1278">Translocase</keyword>
<keyword id="KW-0812">Transmembrane</keyword>
<keyword id="KW-1133">Transmembrane helix</keyword>
<keyword id="KW-0813">Transport</keyword>
<keyword id="KW-0830">Ubiquinone</keyword>
<gene>
    <name type="primary">MT-ND2</name>
    <name type="synonym">MTND2</name>
    <name type="synonym">NADH2</name>
    <name type="synonym">ND2</name>
</gene>